<protein>
    <recommendedName>
        <fullName evidence="1">Protein-L-isoaspartate O-methyltransferase</fullName>
        <ecNumber evidence="1">2.1.1.77</ecNumber>
    </recommendedName>
    <alternativeName>
        <fullName evidence="1">L-isoaspartyl protein carboxyl methyltransferase</fullName>
    </alternativeName>
    <alternativeName>
        <fullName evidence="1">Protein L-isoaspartyl methyltransferase</fullName>
    </alternativeName>
    <alternativeName>
        <fullName evidence="1">Protein-beta-aspartate methyltransferase</fullName>
        <shortName evidence="1">PIMT</shortName>
    </alternativeName>
</protein>
<dbReference type="EC" id="2.1.1.77" evidence="1"/>
<dbReference type="EMBL" id="CP000544">
    <property type="protein sequence ID" value="ABM62197.1"/>
    <property type="molecule type" value="Genomic_DNA"/>
</dbReference>
<dbReference type="RefSeq" id="WP_011814219.1">
    <property type="nucleotide sequence ID" value="NC_008789.1"/>
</dbReference>
<dbReference type="SMR" id="A1WWY5"/>
<dbReference type="STRING" id="349124.Hhal_1430"/>
<dbReference type="KEGG" id="hha:Hhal_1430"/>
<dbReference type="eggNOG" id="COG2518">
    <property type="taxonomic scope" value="Bacteria"/>
</dbReference>
<dbReference type="HOGENOM" id="CLU_055432_2_0_6"/>
<dbReference type="OrthoDB" id="9810066at2"/>
<dbReference type="Proteomes" id="UP000000647">
    <property type="component" value="Chromosome"/>
</dbReference>
<dbReference type="GO" id="GO:0005737">
    <property type="term" value="C:cytoplasm"/>
    <property type="evidence" value="ECO:0007669"/>
    <property type="project" value="UniProtKB-SubCell"/>
</dbReference>
<dbReference type="GO" id="GO:0004719">
    <property type="term" value="F:protein-L-isoaspartate (D-aspartate) O-methyltransferase activity"/>
    <property type="evidence" value="ECO:0007669"/>
    <property type="project" value="UniProtKB-UniRule"/>
</dbReference>
<dbReference type="GO" id="GO:0032259">
    <property type="term" value="P:methylation"/>
    <property type="evidence" value="ECO:0007669"/>
    <property type="project" value="UniProtKB-KW"/>
</dbReference>
<dbReference type="GO" id="GO:0036211">
    <property type="term" value="P:protein modification process"/>
    <property type="evidence" value="ECO:0007669"/>
    <property type="project" value="UniProtKB-UniRule"/>
</dbReference>
<dbReference type="GO" id="GO:0030091">
    <property type="term" value="P:protein repair"/>
    <property type="evidence" value="ECO:0007669"/>
    <property type="project" value="UniProtKB-UniRule"/>
</dbReference>
<dbReference type="CDD" id="cd02440">
    <property type="entry name" value="AdoMet_MTases"/>
    <property type="match status" value="1"/>
</dbReference>
<dbReference type="FunFam" id="3.40.50.150:FF:000010">
    <property type="entry name" value="Protein-L-isoaspartate O-methyltransferase"/>
    <property type="match status" value="1"/>
</dbReference>
<dbReference type="Gene3D" id="3.40.50.150">
    <property type="entry name" value="Vaccinia Virus protein VP39"/>
    <property type="match status" value="1"/>
</dbReference>
<dbReference type="HAMAP" id="MF_00090">
    <property type="entry name" value="PIMT"/>
    <property type="match status" value="1"/>
</dbReference>
<dbReference type="InterPro" id="IPR000682">
    <property type="entry name" value="PCMT"/>
</dbReference>
<dbReference type="InterPro" id="IPR029063">
    <property type="entry name" value="SAM-dependent_MTases_sf"/>
</dbReference>
<dbReference type="NCBIfam" id="TIGR00080">
    <property type="entry name" value="pimt"/>
    <property type="match status" value="1"/>
</dbReference>
<dbReference type="NCBIfam" id="NF001453">
    <property type="entry name" value="PRK00312.1"/>
    <property type="match status" value="1"/>
</dbReference>
<dbReference type="PANTHER" id="PTHR11579">
    <property type="entry name" value="PROTEIN-L-ISOASPARTATE O-METHYLTRANSFERASE"/>
    <property type="match status" value="1"/>
</dbReference>
<dbReference type="PANTHER" id="PTHR11579:SF0">
    <property type="entry name" value="PROTEIN-L-ISOASPARTATE(D-ASPARTATE) O-METHYLTRANSFERASE"/>
    <property type="match status" value="1"/>
</dbReference>
<dbReference type="Pfam" id="PF01135">
    <property type="entry name" value="PCMT"/>
    <property type="match status" value="1"/>
</dbReference>
<dbReference type="SUPFAM" id="SSF53335">
    <property type="entry name" value="S-adenosyl-L-methionine-dependent methyltransferases"/>
    <property type="match status" value="1"/>
</dbReference>
<dbReference type="PROSITE" id="PS01279">
    <property type="entry name" value="PCMT"/>
    <property type="match status" value="1"/>
</dbReference>
<evidence type="ECO:0000255" key="1">
    <source>
        <dbReference type="HAMAP-Rule" id="MF_00090"/>
    </source>
</evidence>
<feature type="chain" id="PRO_0000351866" description="Protein-L-isoaspartate O-methyltransferase">
    <location>
        <begin position="1"/>
        <end position="220"/>
    </location>
</feature>
<feature type="active site" evidence="1">
    <location>
        <position position="70"/>
    </location>
</feature>
<accession>A1WWY5</accession>
<name>PIMT_HALHL</name>
<sequence length="220" mass="24274">MRERNAAGIGMTSQRTRDRLVDALAAQGIQDERVLSAMREVPRHLFVDEALESRAYENTPLPIGEGQTISQPWVVARMTELLLEPGVPERVLEVGTGSGYQAAVLARLVPRVYSIERIGSLLRRARERLQAVRLFNCQLRHGDGYEGWPEYAPYDGIIVTAAPDALPEALLEQLADGGRLVAPIGGAGYQELLVVDRRGDAYEQRRVAGVSFVPMLEGRV</sequence>
<reference key="1">
    <citation type="submission" date="2006-12" db="EMBL/GenBank/DDBJ databases">
        <title>Complete sequence of Halorhodospira halophila SL1.</title>
        <authorList>
            <consortium name="US DOE Joint Genome Institute"/>
            <person name="Copeland A."/>
            <person name="Lucas S."/>
            <person name="Lapidus A."/>
            <person name="Barry K."/>
            <person name="Detter J.C."/>
            <person name="Glavina del Rio T."/>
            <person name="Hammon N."/>
            <person name="Israni S."/>
            <person name="Dalin E."/>
            <person name="Tice H."/>
            <person name="Pitluck S."/>
            <person name="Saunders E."/>
            <person name="Brettin T."/>
            <person name="Bruce D."/>
            <person name="Han C."/>
            <person name="Tapia R."/>
            <person name="Schmutz J."/>
            <person name="Larimer F."/>
            <person name="Land M."/>
            <person name="Hauser L."/>
            <person name="Kyrpides N."/>
            <person name="Mikhailova N."/>
            <person name="Hoff W."/>
            <person name="Richardson P."/>
        </authorList>
    </citation>
    <scope>NUCLEOTIDE SEQUENCE [LARGE SCALE GENOMIC DNA]</scope>
    <source>
        <strain>DSM 244 / SL1</strain>
    </source>
</reference>
<keyword id="KW-0963">Cytoplasm</keyword>
<keyword id="KW-0489">Methyltransferase</keyword>
<keyword id="KW-1185">Reference proteome</keyword>
<keyword id="KW-0949">S-adenosyl-L-methionine</keyword>
<keyword id="KW-0808">Transferase</keyword>
<organism>
    <name type="scientific">Halorhodospira halophila (strain DSM 244 / SL1)</name>
    <name type="common">Ectothiorhodospira halophila (strain DSM 244 / SL1)</name>
    <dbReference type="NCBI Taxonomy" id="349124"/>
    <lineage>
        <taxon>Bacteria</taxon>
        <taxon>Pseudomonadati</taxon>
        <taxon>Pseudomonadota</taxon>
        <taxon>Gammaproteobacteria</taxon>
        <taxon>Chromatiales</taxon>
        <taxon>Ectothiorhodospiraceae</taxon>
        <taxon>Halorhodospira</taxon>
    </lineage>
</organism>
<gene>
    <name evidence="1" type="primary">pcm</name>
    <name type="ordered locus">Hhal_1430</name>
</gene>
<proteinExistence type="inferred from homology"/>
<comment type="function">
    <text evidence="1">Catalyzes the methyl esterification of L-isoaspartyl residues in peptides and proteins that result from spontaneous decomposition of normal L-aspartyl and L-asparaginyl residues. It plays a role in the repair and/or degradation of damaged proteins.</text>
</comment>
<comment type="catalytic activity">
    <reaction evidence="1">
        <text>[protein]-L-isoaspartate + S-adenosyl-L-methionine = [protein]-L-isoaspartate alpha-methyl ester + S-adenosyl-L-homocysteine</text>
        <dbReference type="Rhea" id="RHEA:12705"/>
        <dbReference type="Rhea" id="RHEA-COMP:12143"/>
        <dbReference type="Rhea" id="RHEA-COMP:12144"/>
        <dbReference type="ChEBI" id="CHEBI:57856"/>
        <dbReference type="ChEBI" id="CHEBI:59789"/>
        <dbReference type="ChEBI" id="CHEBI:90596"/>
        <dbReference type="ChEBI" id="CHEBI:90598"/>
        <dbReference type="EC" id="2.1.1.77"/>
    </reaction>
</comment>
<comment type="subcellular location">
    <subcellularLocation>
        <location evidence="1">Cytoplasm</location>
    </subcellularLocation>
</comment>
<comment type="similarity">
    <text evidence="1">Belongs to the methyltransferase superfamily. L-isoaspartyl/D-aspartyl protein methyltransferase family.</text>
</comment>